<evidence type="ECO:0000255" key="1">
    <source>
        <dbReference type="HAMAP-Rule" id="MF_00406"/>
    </source>
</evidence>
<dbReference type="EC" id="4.2.1.59" evidence="1"/>
<dbReference type="EMBL" id="BX548175">
    <property type="protein sequence ID" value="CAE21586.1"/>
    <property type="molecule type" value="Genomic_DNA"/>
</dbReference>
<dbReference type="SMR" id="Q7V5X4"/>
<dbReference type="KEGG" id="pmt:PMT_1411"/>
<dbReference type="eggNOG" id="COG0764">
    <property type="taxonomic scope" value="Bacteria"/>
</dbReference>
<dbReference type="HOGENOM" id="CLU_078912_3_0_3"/>
<dbReference type="Proteomes" id="UP000001423">
    <property type="component" value="Chromosome"/>
</dbReference>
<dbReference type="GO" id="GO:0005737">
    <property type="term" value="C:cytoplasm"/>
    <property type="evidence" value="ECO:0007669"/>
    <property type="project" value="UniProtKB-SubCell"/>
</dbReference>
<dbReference type="GO" id="GO:0016020">
    <property type="term" value="C:membrane"/>
    <property type="evidence" value="ECO:0007669"/>
    <property type="project" value="GOC"/>
</dbReference>
<dbReference type="GO" id="GO:0019171">
    <property type="term" value="F:(3R)-hydroxyacyl-[acyl-carrier-protein] dehydratase activity"/>
    <property type="evidence" value="ECO:0007669"/>
    <property type="project" value="UniProtKB-EC"/>
</dbReference>
<dbReference type="GO" id="GO:0006633">
    <property type="term" value="P:fatty acid biosynthetic process"/>
    <property type="evidence" value="ECO:0007669"/>
    <property type="project" value="UniProtKB-UniRule"/>
</dbReference>
<dbReference type="GO" id="GO:0009245">
    <property type="term" value="P:lipid A biosynthetic process"/>
    <property type="evidence" value="ECO:0007669"/>
    <property type="project" value="UniProtKB-UniRule"/>
</dbReference>
<dbReference type="CDD" id="cd01288">
    <property type="entry name" value="FabZ"/>
    <property type="match status" value="1"/>
</dbReference>
<dbReference type="FunFam" id="3.10.129.10:FF:000001">
    <property type="entry name" value="3-hydroxyacyl-[acyl-carrier-protein] dehydratase FabZ"/>
    <property type="match status" value="1"/>
</dbReference>
<dbReference type="Gene3D" id="3.10.129.10">
    <property type="entry name" value="Hotdog Thioesterase"/>
    <property type="match status" value="1"/>
</dbReference>
<dbReference type="HAMAP" id="MF_00406">
    <property type="entry name" value="FabZ"/>
    <property type="match status" value="1"/>
</dbReference>
<dbReference type="InterPro" id="IPR013114">
    <property type="entry name" value="FabA_FabZ"/>
</dbReference>
<dbReference type="InterPro" id="IPR010084">
    <property type="entry name" value="FabZ"/>
</dbReference>
<dbReference type="InterPro" id="IPR029069">
    <property type="entry name" value="HotDog_dom_sf"/>
</dbReference>
<dbReference type="NCBIfam" id="TIGR01750">
    <property type="entry name" value="fabZ"/>
    <property type="match status" value="1"/>
</dbReference>
<dbReference type="NCBIfam" id="NF000582">
    <property type="entry name" value="PRK00006.1"/>
    <property type="match status" value="1"/>
</dbReference>
<dbReference type="PANTHER" id="PTHR30272">
    <property type="entry name" value="3-HYDROXYACYL-[ACYL-CARRIER-PROTEIN] DEHYDRATASE"/>
    <property type="match status" value="1"/>
</dbReference>
<dbReference type="PANTHER" id="PTHR30272:SF1">
    <property type="entry name" value="3-HYDROXYACYL-[ACYL-CARRIER-PROTEIN] DEHYDRATASE"/>
    <property type="match status" value="1"/>
</dbReference>
<dbReference type="Pfam" id="PF07977">
    <property type="entry name" value="FabA"/>
    <property type="match status" value="1"/>
</dbReference>
<dbReference type="SUPFAM" id="SSF54637">
    <property type="entry name" value="Thioesterase/thiol ester dehydrase-isomerase"/>
    <property type="match status" value="1"/>
</dbReference>
<comment type="function">
    <text evidence="1">Involved in unsaturated fatty acids biosynthesis. Catalyzes the dehydration of short chain beta-hydroxyacyl-ACPs and long chain saturated and unsaturated beta-hydroxyacyl-ACPs.</text>
</comment>
<comment type="catalytic activity">
    <reaction evidence="1">
        <text>a (3R)-hydroxyacyl-[ACP] = a (2E)-enoyl-[ACP] + H2O</text>
        <dbReference type="Rhea" id="RHEA:13097"/>
        <dbReference type="Rhea" id="RHEA-COMP:9925"/>
        <dbReference type="Rhea" id="RHEA-COMP:9945"/>
        <dbReference type="ChEBI" id="CHEBI:15377"/>
        <dbReference type="ChEBI" id="CHEBI:78784"/>
        <dbReference type="ChEBI" id="CHEBI:78827"/>
        <dbReference type="EC" id="4.2.1.59"/>
    </reaction>
</comment>
<comment type="subcellular location">
    <subcellularLocation>
        <location evidence="1">Cytoplasm</location>
    </subcellularLocation>
</comment>
<comment type="similarity">
    <text evidence="1">Belongs to the thioester dehydratase family. FabZ subfamily.</text>
</comment>
<sequence>MLTSEQIMGLLPHRYPFALVDRVVLHEPGQRAVAIKNVTLNEPQFQGHFPGRPLMPGVLIVEAMAQVGGLIVAQMPDLPKGLFVFAGIDAVRFRRPVVPGDQLTISCELLSLKRQRFGKVRGEARVEGQLVCSGELMFSLVD</sequence>
<name>FABZ_PROMM</name>
<keyword id="KW-0963">Cytoplasm</keyword>
<keyword id="KW-0441">Lipid A biosynthesis</keyword>
<keyword id="KW-0444">Lipid biosynthesis</keyword>
<keyword id="KW-0443">Lipid metabolism</keyword>
<keyword id="KW-0456">Lyase</keyword>
<keyword id="KW-1185">Reference proteome</keyword>
<organism>
    <name type="scientific">Prochlorococcus marinus (strain MIT 9313)</name>
    <dbReference type="NCBI Taxonomy" id="74547"/>
    <lineage>
        <taxon>Bacteria</taxon>
        <taxon>Bacillati</taxon>
        <taxon>Cyanobacteriota</taxon>
        <taxon>Cyanophyceae</taxon>
        <taxon>Synechococcales</taxon>
        <taxon>Prochlorococcaceae</taxon>
        <taxon>Prochlorococcus</taxon>
    </lineage>
</organism>
<proteinExistence type="inferred from homology"/>
<protein>
    <recommendedName>
        <fullName evidence="1">3-hydroxyacyl-[acyl-carrier-protein] dehydratase FabZ</fullName>
        <ecNumber evidence="1">4.2.1.59</ecNumber>
    </recommendedName>
    <alternativeName>
        <fullName evidence="1">(3R)-hydroxymyristoyl-[acyl-carrier-protein] dehydratase</fullName>
        <shortName evidence="1">(3R)-hydroxymyristoyl-ACP dehydrase</shortName>
    </alternativeName>
    <alternativeName>
        <fullName evidence="1">Beta-hydroxyacyl-ACP dehydratase</fullName>
    </alternativeName>
</protein>
<accession>Q7V5X4</accession>
<feature type="chain" id="PRO_0000091711" description="3-hydroxyacyl-[acyl-carrier-protein] dehydratase FabZ">
    <location>
        <begin position="1"/>
        <end position="142"/>
    </location>
</feature>
<feature type="active site" evidence="1">
    <location>
        <position position="48"/>
    </location>
</feature>
<reference key="1">
    <citation type="journal article" date="2003" name="Nature">
        <title>Genome divergence in two Prochlorococcus ecotypes reflects oceanic niche differentiation.</title>
        <authorList>
            <person name="Rocap G."/>
            <person name="Larimer F.W."/>
            <person name="Lamerdin J.E."/>
            <person name="Malfatti S."/>
            <person name="Chain P."/>
            <person name="Ahlgren N.A."/>
            <person name="Arellano A."/>
            <person name="Coleman M."/>
            <person name="Hauser L."/>
            <person name="Hess W.R."/>
            <person name="Johnson Z.I."/>
            <person name="Land M.L."/>
            <person name="Lindell D."/>
            <person name="Post A.F."/>
            <person name="Regala W."/>
            <person name="Shah M."/>
            <person name="Shaw S.L."/>
            <person name="Steglich C."/>
            <person name="Sullivan M.B."/>
            <person name="Ting C.S."/>
            <person name="Tolonen A."/>
            <person name="Webb E.A."/>
            <person name="Zinser E.R."/>
            <person name="Chisholm S.W."/>
        </authorList>
    </citation>
    <scope>NUCLEOTIDE SEQUENCE [LARGE SCALE GENOMIC DNA]</scope>
    <source>
        <strain>MIT 9313</strain>
    </source>
</reference>
<gene>
    <name evidence="1" type="primary">fabZ</name>
    <name type="ordered locus">PMT_1411</name>
</gene>